<name>RL22_MYCSS</name>
<accession>Q1BDA2</accession>
<sequence length="177" mass="18442">MTTATTNPSTYPNAMAVARYVGISASKARRVIDLVRGKSVEEALDILRWAPQQASEPVAKVIASAAANAQNNEGLDPSTLVVATIHADEGPTAKRIRPRAQGRAFRIRKRTSHITVIVESRPSREGRRGGAGESAGGARARRAQGSKAAAAKKAPASSSKKAATTTEASEEAKGGSQ</sequence>
<evidence type="ECO:0000255" key="1">
    <source>
        <dbReference type="HAMAP-Rule" id="MF_01331"/>
    </source>
</evidence>
<evidence type="ECO:0000256" key="2">
    <source>
        <dbReference type="SAM" id="MobiDB-lite"/>
    </source>
</evidence>
<evidence type="ECO:0000305" key="3"/>
<proteinExistence type="inferred from homology"/>
<dbReference type="EMBL" id="CP000384">
    <property type="protein sequence ID" value="ABG07132.1"/>
    <property type="molecule type" value="Genomic_DNA"/>
</dbReference>
<dbReference type="SMR" id="Q1BDA2"/>
<dbReference type="KEGG" id="mmc:Mmcs_1018"/>
<dbReference type="HOGENOM" id="CLU_083987_3_2_11"/>
<dbReference type="BioCyc" id="MSP164756:G1G6O-1042-MONOMER"/>
<dbReference type="GO" id="GO:0022625">
    <property type="term" value="C:cytosolic large ribosomal subunit"/>
    <property type="evidence" value="ECO:0007669"/>
    <property type="project" value="TreeGrafter"/>
</dbReference>
<dbReference type="GO" id="GO:0019843">
    <property type="term" value="F:rRNA binding"/>
    <property type="evidence" value="ECO:0007669"/>
    <property type="project" value="UniProtKB-UniRule"/>
</dbReference>
<dbReference type="GO" id="GO:0003735">
    <property type="term" value="F:structural constituent of ribosome"/>
    <property type="evidence" value="ECO:0007669"/>
    <property type="project" value="InterPro"/>
</dbReference>
<dbReference type="GO" id="GO:0006412">
    <property type="term" value="P:translation"/>
    <property type="evidence" value="ECO:0007669"/>
    <property type="project" value="UniProtKB-UniRule"/>
</dbReference>
<dbReference type="CDD" id="cd00336">
    <property type="entry name" value="Ribosomal_L22"/>
    <property type="match status" value="1"/>
</dbReference>
<dbReference type="FunFam" id="3.90.470.10:FF:000002">
    <property type="entry name" value="50S ribosomal protein L22"/>
    <property type="match status" value="1"/>
</dbReference>
<dbReference type="Gene3D" id="3.90.470.10">
    <property type="entry name" value="Ribosomal protein L22/L17"/>
    <property type="match status" value="1"/>
</dbReference>
<dbReference type="HAMAP" id="MF_01331_B">
    <property type="entry name" value="Ribosomal_uL22_B"/>
    <property type="match status" value="1"/>
</dbReference>
<dbReference type="InterPro" id="IPR001063">
    <property type="entry name" value="Ribosomal_uL22"/>
</dbReference>
<dbReference type="InterPro" id="IPR005727">
    <property type="entry name" value="Ribosomal_uL22_bac/chlpt-type"/>
</dbReference>
<dbReference type="InterPro" id="IPR047867">
    <property type="entry name" value="Ribosomal_uL22_bac/org-type"/>
</dbReference>
<dbReference type="InterPro" id="IPR018260">
    <property type="entry name" value="Ribosomal_uL22_CS"/>
</dbReference>
<dbReference type="InterPro" id="IPR036394">
    <property type="entry name" value="Ribosomal_uL22_sf"/>
</dbReference>
<dbReference type="NCBIfam" id="TIGR01044">
    <property type="entry name" value="rplV_bact"/>
    <property type="match status" value="1"/>
</dbReference>
<dbReference type="PANTHER" id="PTHR13501">
    <property type="entry name" value="CHLOROPLAST 50S RIBOSOMAL PROTEIN L22-RELATED"/>
    <property type="match status" value="1"/>
</dbReference>
<dbReference type="PANTHER" id="PTHR13501:SF8">
    <property type="entry name" value="LARGE RIBOSOMAL SUBUNIT PROTEIN UL22M"/>
    <property type="match status" value="1"/>
</dbReference>
<dbReference type="Pfam" id="PF00237">
    <property type="entry name" value="Ribosomal_L22"/>
    <property type="match status" value="1"/>
</dbReference>
<dbReference type="SUPFAM" id="SSF54843">
    <property type="entry name" value="Ribosomal protein L22"/>
    <property type="match status" value="1"/>
</dbReference>
<dbReference type="PROSITE" id="PS00464">
    <property type="entry name" value="RIBOSOMAL_L22"/>
    <property type="match status" value="1"/>
</dbReference>
<gene>
    <name evidence="1" type="primary">rplV</name>
    <name type="ordered locus">Mmcs_1018</name>
</gene>
<feature type="chain" id="PRO_0000354491" description="Large ribosomal subunit protein uL22">
    <location>
        <begin position="1"/>
        <end position="177"/>
    </location>
</feature>
<feature type="region of interest" description="Disordered" evidence="2">
    <location>
        <begin position="118"/>
        <end position="177"/>
    </location>
</feature>
<feature type="compositionally biased region" description="Basic and acidic residues" evidence="2">
    <location>
        <begin position="121"/>
        <end position="130"/>
    </location>
</feature>
<feature type="compositionally biased region" description="Low complexity" evidence="2">
    <location>
        <begin position="145"/>
        <end position="167"/>
    </location>
</feature>
<protein>
    <recommendedName>
        <fullName evidence="1">Large ribosomal subunit protein uL22</fullName>
    </recommendedName>
    <alternativeName>
        <fullName evidence="3">50S ribosomal protein L22</fullName>
    </alternativeName>
</protein>
<reference key="1">
    <citation type="submission" date="2006-06" db="EMBL/GenBank/DDBJ databases">
        <title>Complete sequence of chromosome of Mycobacterium sp. MCS.</title>
        <authorList>
            <consortium name="US DOE Joint Genome Institute"/>
            <person name="Copeland A."/>
            <person name="Lucas S."/>
            <person name="Lapidus A."/>
            <person name="Barry K."/>
            <person name="Detter J.C."/>
            <person name="Glavina del Rio T."/>
            <person name="Hammon N."/>
            <person name="Israni S."/>
            <person name="Dalin E."/>
            <person name="Tice H."/>
            <person name="Pitluck S."/>
            <person name="Martinez M."/>
            <person name="Schmutz J."/>
            <person name="Larimer F."/>
            <person name="Land M."/>
            <person name="Hauser L."/>
            <person name="Kyrpides N."/>
            <person name="Kim E."/>
            <person name="Miller C.D."/>
            <person name="Hughes J.E."/>
            <person name="Anderson A.J."/>
            <person name="Sims R.C."/>
            <person name="Richardson P."/>
        </authorList>
    </citation>
    <scope>NUCLEOTIDE SEQUENCE [LARGE SCALE GENOMIC DNA]</scope>
    <source>
        <strain>MCS</strain>
    </source>
</reference>
<keyword id="KW-0687">Ribonucleoprotein</keyword>
<keyword id="KW-0689">Ribosomal protein</keyword>
<keyword id="KW-0694">RNA-binding</keyword>
<keyword id="KW-0699">rRNA-binding</keyword>
<organism>
    <name type="scientific">Mycobacterium sp. (strain MCS)</name>
    <dbReference type="NCBI Taxonomy" id="164756"/>
    <lineage>
        <taxon>Bacteria</taxon>
        <taxon>Bacillati</taxon>
        <taxon>Actinomycetota</taxon>
        <taxon>Actinomycetes</taxon>
        <taxon>Mycobacteriales</taxon>
        <taxon>Mycobacteriaceae</taxon>
        <taxon>Mycobacterium</taxon>
    </lineage>
</organism>
<comment type="function">
    <text evidence="1">This protein binds specifically to 23S rRNA; its binding is stimulated by other ribosomal proteins, e.g. L4, L17, and L20. It is important during the early stages of 50S assembly. It makes multiple contacts with different domains of the 23S rRNA in the assembled 50S subunit and ribosome (By similarity).</text>
</comment>
<comment type="function">
    <text evidence="1">The globular domain of the protein is located near the polypeptide exit tunnel on the outside of the subunit, while an extended beta-hairpin is found that lines the wall of the exit tunnel in the center of the 70S ribosome.</text>
</comment>
<comment type="subunit">
    <text evidence="1">Part of the 50S ribosomal subunit.</text>
</comment>
<comment type="similarity">
    <text evidence="1">Belongs to the universal ribosomal protein uL22 family.</text>
</comment>